<sequence>MTLPPLSHLDRLEAESIHILREVAAEFRAPVMLYSVGKDSSVLLHLLLKAFAPSPPPIPLLHVDTRWKFREMIAFRDRRAAETAVDLRVHINPEGVAQDIGPISHGAAVHTDVMKTQGLKQALEQGGFDAAIGGARRDEEKSRAKERVFSFRNARHRWDPKNQRPELWNLYNARTKPGESVRVFPLSNWTELDIWLYIYRERIPVVPLYFAAPRPVVQRDGAWIMVDDDRLPLHPGETPQLRSVRFRTLGCYPLTGAIESTADTLEAVIAEMLVSTSSERQGRMIDHAPGASMEQKKLEGYF</sequence>
<name>CYSD_XANCP</name>
<protein>
    <recommendedName>
        <fullName evidence="1">Sulfate adenylyltransferase subunit 2</fullName>
        <ecNumber evidence="1">2.7.7.4</ecNumber>
    </recommendedName>
    <alternativeName>
        <fullName evidence="1">ATP-sulfurylase small subunit</fullName>
    </alternativeName>
    <alternativeName>
        <fullName evidence="1">Sulfate adenylate transferase</fullName>
        <shortName evidence="1">SAT</shortName>
    </alternativeName>
</protein>
<comment type="function">
    <text evidence="1">With CysN forms the ATP sulfurylase (ATPS) that catalyzes the adenylation of sulfate producing adenosine 5'-phosphosulfate (APS) and diphosphate, the first enzymatic step in sulfur assimilation pathway. APS synthesis involves the formation of a high-energy phosphoric-sulfuric acid anhydride bond driven by GTP hydrolysis by CysN coupled to ATP hydrolysis by CysD.</text>
</comment>
<comment type="catalytic activity">
    <reaction evidence="1">
        <text>sulfate + ATP + H(+) = adenosine 5'-phosphosulfate + diphosphate</text>
        <dbReference type="Rhea" id="RHEA:18133"/>
        <dbReference type="ChEBI" id="CHEBI:15378"/>
        <dbReference type="ChEBI" id="CHEBI:16189"/>
        <dbReference type="ChEBI" id="CHEBI:30616"/>
        <dbReference type="ChEBI" id="CHEBI:33019"/>
        <dbReference type="ChEBI" id="CHEBI:58243"/>
        <dbReference type="EC" id="2.7.7.4"/>
    </reaction>
</comment>
<comment type="pathway">
    <text evidence="1">Sulfur metabolism; hydrogen sulfide biosynthesis; sulfite from sulfate: step 1/3.</text>
</comment>
<comment type="subunit">
    <text evidence="1">Heterodimer composed of CysD, the smaller subunit, and CysN.</text>
</comment>
<comment type="similarity">
    <text evidence="1">Belongs to the PAPS reductase family. CysD subfamily.</text>
</comment>
<reference key="1">
    <citation type="journal article" date="2002" name="Nature">
        <title>Comparison of the genomes of two Xanthomonas pathogens with differing host specificities.</title>
        <authorList>
            <person name="da Silva A.C.R."/>
            <person name="Ferro J.A."/>
            <person name="Reinach F.C."/>
            <person name="Farah C.S."/>
            <person name="Furlan L.R."/>
            <person name="Quaggio R.B."/>
            <person name="Monteiro-Vitorello C.B."/>
            <person name="Van Sluys M.A."/>
            <person name="Almeida N.F. Jr."/>
            <person name="Alves L.M.C."/>
            <person name="do Amaral A.M."/>
            <person name="Bertolini M.C."/>
            <person name="Camargo L.E.A."/>
            <person name="Camarotte G."/>
            <person name="Cannavan F."/>
            <person name="Cardozo J."/>
            <person name="Chambergo F."/>
            <person name="Ciapina L.P."/>
            <person name="Cicarelli R.M.B."/>
            <person name="Coutinho L.L."/>
            <person name="Cursino-Santos J.R."/>
            <person name="El-Dorry H."/>
            <person name="Faria J.B."/>
            <person name="Ferreira A.J.S."/>
            <person name="Ferreira R.C.C."/>
            <person name="Ferro M.I.T."/>
            <person name="Formighieri E.F."/>
            <person name="Franco M.C."/>
            <person name="Greggio C.C."/>
            <person name="Gruber A."/>
            <person name="Katsuyama A.M."/>
            <person name="Kishi L.T."/>
            <person name="Leite R.P."/>
            <person name="Lemos E.G.M."/>
            <person name="Lemos M.V.F."/>
            <person name="Locali E.C."/>
            <person name="Machado M.A."/>
            <person name="Madeira A.M.B.N."/>
            <person name="Martinez-Rossi N.M."/>
            <person name="Martins E.C."/>
            <person name="Meidanis J."/>
            <person name="Menck C.F.M."/>
            <person name="Miyaki C.Y."/>
            <person name="Moon D.H."/>
            <person name="Moreira L.M."/>
            <person name="Novo M.T.M."/>
            <person name="Okura V.K."/>
            <person name="Oliveira M.C."/>
            <person name="Oliveira V.R."/>
            <person name="Pereira H.A."/>
            <person name="Rossi A."/>
            <person name="Sena J.A.D."/>
            <person name="Silva C."/>
            <person name="de Souza R.F."/>
            <person name="Spinola L.A.F."/>
            <person name="Takita M.A."/>
            <person name="Tamura R.E."/>
            <person name="Teixeira E.C."/>
            <person name="Tezza R.I.D."/>
            <person name="Trindade dos Santos M."/>
            <person name="Truffi D."/>
            <person name="Tsai S.M."/>
            <person name="White F.F."/>
            <person name="Setubal J.C."/>
            <person name="Kitajima J.P."/>
        </authorList>
    </citation>
    <scope>NUCLEOTIDE SEQUENCE [LARGE SCALE GENOMIC DNA]</scope>
    <source>
        <strain>ATCC 33913 / DSM 3586 / NCPPB 528 / LMG 568 / P 25</strain>
    </source>
</reference>
<organism>
    <name type="scientific">Xanthomonas campestris pv. campestris (strain ATCC 33913 / DSM 3586 / NCPPB 528 / LMG 568 / P 25)</name>
    <dbReference type="NCBI Taxonomy" id="190485"/>
    <lineage>
        <taxon>Bacteria</taxon>
        <taxon>Pseudomonadati</taxon>
        <taxon>Pseudomonadota</taxon>
        <taxon>Gammaproteobacteria</taxon>
        <taxon>Lysobacterales</taxon>
        <taxon>Lysobacteraceae</taxon>
        <taxon>Xanthomonas</taxon>
    </lineage>
</organism>
<evidence type="ECO:0000255" key="1">
    <source>
        <dbReference type="HAMAP-Rule" id="MF_00064"/>
    </source>
</evidence>
<accession>Q8P610</accession>
<keyword id="KW-0067">ATP-binding</keyword>
<keyword id="KW-0547">Nucleotide-binding</keyword>
<keyword id="KW-0548">Nucleotidyltransferase</keyword>
<keyword id="KW-1185">Reference proteome</keyword>
<keyword id="KW-0808">Transferase</keyword>
<feature type="chain" id="PRO_0000340223" description="Sulfate adenylyltransferase subunit 2">
    <location>
        <begin position="1"/>
        <end position="302"/>
    </location>
</feature>
<gene>
    <name evidence="1" type="primary">cysD</name>
    <name type="ordered locus">XCC3172</name>
</gene>
<dbReference type="EC" id="2.7.7.4" evidence="1"/>
<dbReference type="EMBL" id="AE008922">
    <property type="protein sequence ID" value="AAM42442.1"/>
    <property type="molecule type" value="Genomic_DNA"/>
</dbReference>
<dbReference type="RefSeq" id="NP_638518.1">
    <property type="nucleotide sequence ID" value="NC_003902.1"/>
</dbReference>
<dbReference type="RefSeq" id="WP_011038279.1">
    <property type="nucleotide sequence ID" value="NC_003902.1"/>
</dbReference>
<dbReference type="SMR" id="Q8P610"/>
<dbReference type="STRING" id="190485.XCC3172"/>
<dbReference type="EnsemblBacteria" id="AAM42442">
    <property type="protein sequence ID" value="AAM42442"/>
    <property type="gene ID" value="XCC3172"/>
</dbReference>
<dbReference type="GeneID" id="58012276"/>
<dbReference type="KEGG" id="xcc:XCC3172"/>
<dbReference type="PATRIC" id="fig|190485.4.peg.3388"/>
<dbReference type="eggNOG" id="COG0175">
    <property type="taxonomic scope" value="Bacteria"/>
</dbReference>
<dbReference type="HOGENOM" id="CLU_043026_0_0_6"/>
<dbReference type="OrthoDB" id="9772604at2"/>
<dbReference type="UniPathway" id="UPA00140">
    <property type="reaction ID" value="UER00204"/>
</dbReference>
<dbReference type="Proteomes" id="UP000001010">
    <property type="component" value="Chromosome"/>
</dbReference>
<dbReference type="GO" id="GO:0005524">
    <property type="term" value="F:ATP binding"/>
    <property type="evidence" value="ECO:0007669"/>
    <property type="project" value="UniProtKB-KW"/>
</dbReference>
<dbReference type="GO" id="GO:0004781">
    <property type="term" value="F:sulfate adenylyltransferase (ATP) activity"/>
    <property type="evidence" value="ECO:0007669"/>
    <property type="project" value="UniProtKB-UniRule"/>
</dbReference>
<dbReference type="GO" id="GO:0070814">
    <property type="term" value="P:hydrogen sulfide biosynthetic process"/>
    <property type="evidence" value="ECO:0007669"/>
    <property type="project" value="UniProtKB-UniRule"/>
</dbReference>
<dbReference type="GO" id="GO:0000103">
    <property type="term" value="P:sulfate assimilation"/>
    <property type="evidence" value="ECO:0007669"/>
    <property type="project" value="UniProtKB-UniRule"/>
</dbReference>
<dbReference type="CDD" id="cd23946">
    <property type="entry name" value="Sulfate_adenylyltransferase_2"/>
    <property type="match status" value="1"/>
</dbReference>
<dbReference type="FunFam" id="3.40.50.620:FF:000002">
    <property type="entry name" value="Sulfate adenylyltransferase subunit 2"/>
    <property type="match status" value="1"/>
</dbReference>
<dbReference type="Gene3D" id="3.40.50.620">
    <property type="entry name" value="HUPs"/>
    <property type="match status" value="1"/>
</dbReference>
<dbReference type="HAMAP" id="MF_00064">
    <property type="entry name" value="Sulf_adenylyltr_sub2"/>
    <property type="match status" value="1"/>
</dbReference>
<dbReference type="InterPro" id="IPR002500">
    <property type="entry name" value="PAPS_reduct_dom"/>
</dbReference>
<dbReference type="InterPro" id="IPR014729">
    <property type="entry name" value="Rossmann-like_a/b/a_fold"/>
</dbReference>
<dbReference type="InterPro" id="IPR011784">
    <property type="entry name" value="SO4_adenylTrfase_ssu"/>
</dbReference>
<dbReference type="InterPro" id="IPR050128">
    <property type="entry name" value="Sulfate_adenylyltrnsfr_sub2"/>
</dbReference>
<dbReference type="NCBIfam" id="TIGR02039">
    <property type="entry name" value="CysD"/>
    <property type="match status" value="1"/>
</dbReference>
<dbReference type="NCBIfam" id="NF003587">
    <property type="entry name" value="PRK05253.1"/>
    <property type="match status" value="1"/>
</dbReference>
<dbReference type="NCBIfam" id="NF009214">
    <property type="entry name" value="PRK12563.1"/>
    <property type="match status" value="1"/>
</dbReference>
<dbReference type="PANTHER" id="PTHR43196">
    <property type="entry name" value="SULFATE ADENYLYLTRANSFERASE SUBUNIT 2"/>
    <property type="match status" value="1"/>
</dbReference>
<dbReference type="PANTHER" id="PTHR43196:SF1">
    <property type="entry name" value="SULFATE ADENYLYLTRANSFERASE SUBUNIT 2"/>
    <property type="match status" value="1"/>
</dbReference>
<dbReference type="Pfam" id="PF01507">
    <property type="entry name" value="PAPS_reduct"/>
    <property type="match status" value="1"/>
</dbReference>
<dbReference type="PIRSF" id="PIRSF002936">
    <property type="entry name" value="CysDAde_trans"/>
    <property type="match status" value="1"/>
</dbReference>
<dbReference type="SUPFAM" id="SSF52402">
    <property type="entry name" value="Adenine nucleotide alpha hydrolases-like"/>
    <property type="match status" value="1"/>
</dbReference>
<proteinExistence type="inferred from homology"/>